<organism>
    <name type="scientific">Streptococcus equi subsp. equi (strain 4047)</name>
    <dbReference type="NCBI Taxonomy" id="553482"/>
    <lineage>
        <taxon>Bacteria</taxon>
        <taxon>Bacillati</taxon>
        <taxon>Bacillota</taxon>
        <taxon>Bacilli</taxon>
        <taxon>Lactobacillales</taxon>
        <taxon>Streptococcaceae</taxon>
        <taxon>Streptococcus</taxon>
    </lineage>
</organism>
<protein>
    <recommendedName>
        <fullName evidence="1">Peptide methionine sulfoxide reductase MsrA</fullName>
        <shortName evidence="1">Protein-methionine-S-oxide reductase</shortName>
        <ecNumber evidence="1">1.8.4.11</ecNumber>
    </recommendedName>
    <alternativeName>
        <fullName evidence="1">Peptide-methionine (S)-S-oxide reductase</fullName>
        <shortName evidence="1">Peptide Met(O) reductase</shortName>
    </alternativeName>
</protein>
<proteinExistence type="inferred from homology"/>
<keyword id="KW-0560">Oxidoreductase</keyword>
<comment type="function">
    <text evidence="1">Has an important function as a repair enzyme for proteins that have been inactivated by oxidation. Catalyzes the reversible oxidation-reduction of methionine sulfoxide in proteins to methionine.</text>
</comment>
<comment type="catalytic activity">
    <reaction evidence="1">
        <text>L-methionyl-[protein] + [thioredoxin]-disulfide + H2O = L-methionyl-(S)-S-oxide-[protein] + [thioredoxin]-dithiol</text>
        <dbReference type="Rhea" id="RHEA:14217"/>
        <dbReference type="Rhea" id="RHEA-COMP:10698"/>
        <dbReference type="Rhea" id="RHEA-COMP:10700"/>
        <dbReference type="Rhea" id="RHEA-COMP:12313"/>
        <dbReference type="Rhea" id="RHEA-COMP:12315"/>
        <dbReference type="ChEBI" id="CHEBI:15377"/>
        <dbReference type="ChEBI" id="CHEBI:16044"/>
        <dbReference type="ChEBI" id="CHEBI:29950"/>
        <dbReference type="ChEBI" id="CHEBI:44120"/>
        <dbReference type="ChEBI" id="CHEBI:50058"/>
        <dbReference type="EC" id="1.8.4.11"/>
    </reaction>
</comment>
<comment type="catalytic activity">
    <reaction evidence="1">
        <text>[thioredoxin]-disulfide + L-methionine + H2O = L-methionine (S)-S-oxide + [thioredoxin]-dithiol</text>
        <dbReference type="Rhea" id="RHEA:19993"/>
        <dbReference type="Rhea" id="RHEA-COMP:10698"/>
        <dbReference type="Rhea" id="RHEA-COMP:10700"/>
        <dbReference type="ChEBI" id="CHEBI:15377"/>
        <dbReference type="ChEBI" id="CHEBI:29950"/>
        <dbReference type="ChEBI" id="CHEBI:50058"/>
        <dbReference type="ChEBI" id="CHEBI:57844"/>
        <dbReference type="ChEBI" id="CHEBI:58772"/>
        <dbReference type="EC" id="1.8.4.11"/>
    </reaction>
</comment>
<comment type="similarity">
    <text evidence="1">Belongs to the MsrA Met sulfoxide reductase family.</text>
</comment>
<sequence length="169" mass="19578">MERAIFAGGCFWCMVQPFEEQAGILSVRSGYTGGHVHNPSYEQVCSKTTGHTEAVEIIFDPSLISYSDLVELYWAQTDPTDAFGQFEDRGDNYRPVIYYTDERQREIAERSKQTLQASGRFDQPIVTSIEPAEPFYLAEDYHQGFYQKNPERYAQSSAIRHQFLEEHWQ</sequence>
<reference key="1">
    <citation type="journal article" date="2009" name="PLoS Pathog.">
        <title>Genomic evidence for the evolution of Streptococcus equi: host restriction, increased virulence, and genetic exchange with human pathogens.</title>
        <authorList>
            <person name="Holden M.T.G."/>
            <person name="Heather Z."/>
            <person name="Paillot R."/>
            <person name="Steward K.F."/>
            <person name="Webb K."/>
            <person name="Ainslie F."/>
            <person name="Jourdan T."/>
            <person name="Bason N.C."/>
            <person name="Holroyd N.E."/>
            <person name="Mungall K."/>
            <person name="Quail M.A."/>
            <person name="Sanders M."/>
            <person name="Simmonds M."/>
            <person name="Willey D."/>
            <person name="Brooks K."/>
            <person name="Aanensen D.M."/>
            <person name="Spratt B.G."/>
            <person name="Jolley K.A."/>
            <person name="Maiden M.C.J."/>
            <person name="Kehoe M."/>
            <person name="Chanter N."/>
            <person name="Bentley S.D."/>
            <person name="Robinson C."/>
            <person name="Maskell D.J."/>
            <person name="Parkhill J."/>
            <person name="Waller A.S."/>
        </authorList>
    </citation>
    <scope>NUCLEOTIDE SEQUENCE [LARGE SCALE GENOMIC DNA]</scope>
    <source>
        <strain>4047</strain>
    </source>
</reference>
<evidence type="ECO:0000255" key="1">
    <source>
        <dbReference type="HAMAP-Rule" id="MF_01401"/>
    </source>
</evidence>
<gene>
    <name evidence="1" type="primary">msrA</name>
    <name type="ordered locus">SEQ_1640</name>
</gene>
<dbReference type="EC" id="1.8.4.11" evidence="1"/>
<dbReference type="EMBL" id="FM204883">
    <property type="protein sequence ID" value="CAW94652.1"/>
    <property type="molecule type" value="Genomic_DNA"/>
</dbReference>
<dbReference type="RefSeq" id="WP_012679890.1">
    <property type="nucleotide sequence ID" value="NC_012471.1"/>
</dbReference>
<dbReference type="SMR" id="C0MBS9"/>
<dbReference type="KEGG" id="seu:SEQ_1640"/>
<dbReference type="HOGENOM" id="CLU_031040_10_1_9"/>
<dbReference type="OrthoDB" id="4174719at2"/>
<dbReference type="Proteomes" id="UP000001365">
    <property type="component" value="Chromosome"/>
</dbReference>
<dbReference type="GO" id="GO:0033744">
    <property type="term" value="F:L-methionine:thioredoxin-disulfide S-oxidoreductase activity"/>
    <property type="evidence" value="ECO:0007669"/>
    <property type="project" value="RHEA"/>
</dbReference>
<dbReference type="GO" id="GO:0008113">
    <property type="term" value="F:peptide-methionine (S)-S-oxide reductase activity"/>
    <property type="evidence" value="ECO:0007669"/>
    <property type="project" value="UniProtKB-UniRule"/>
</dbReference>
<dbReference type="GO" id="GO:0036211">
    <property type="term" value="P:protein modification process"/>
    <property type="evidence" value="ECO:0007669"/>
    <property type="project" value="UniProtKB-UniRule"/>
</dbReference>
<dbReference type="Gene3D" id="3.30.1060.10">
    <property type="entry name" value="Peptide methionine sulphoxide reductase MsrA"/>
    <property type="match status" value="1"/>
</dbReference>
<dbReference type="HAMAP" id="MF_01401">
    <property type="entry name" value="MsrA"/>
    <property type="match status" value="1"/>
</dbReference>
<dbReference type="InterPro" id="IPR002569">
    <property type="entry name" value="Met_Sox_Rdtase_MsrA_dom"/>
</dbReference>
<dbReference type="InterPro" id="IPR036509">
    <property type="entry name" value="Met_Sox_Rdtase_MsrA_sf"/>
</dbReference>
<dbReference type="NCBIfam" id="TIGR00401">
    <property type="entry name" value="msrA"/>
    <property type="match status" value="1"/>
</dbReference>
<dbReference type="PANTHER" id="PTHR43774">
    <property type="entry name" value="PEPTIDE METHIONINE SULFOXIDE REDUCTASE"/>
    <property type="match status" value="1"/>
</dbReference>
<dbReference type="PANTHER" id="PTHR43774:SF1">
    <property type="entry name" value="PEPTIDE METHIONINE SULFOXIDE REDUCTASE MSRA 2"/>
    <property type="match status" value="1"/>
</dbReference>
<dbReference type="Pfam" id="PF01625">
    <property type="entry name" value="PMSR"/>
    <property type="match status" value="1"/>
</dbReference>
<dbReference type="SUPFAM" id="SSF55068">
    <property type="entry name" value="Peptide methionine sulfoxide reductase"/>
    <property type="match status" value="1"/>
</dbReference>
<accession>C0MBS9</accession>
<feature type="chain" id="PRO_1000184571" description="Peptide methionine sulfoxide reductase MsrA">
    <location>
        <begin position="1"/>
        <end position="169"/>
    </location>
</feature>
<feature type="active site" evidence="1">
    <location>
        <position position="10"/>
    </location>
</feature>
<name>MSRA_STRE4</name>